<keyword id="KW-0004">4Fe-4S</keyword>
<keyword id="KW-0408">Iron</keyword>
<keyword id="KW-0411">Iron-sulfur</keyword>
<keyword id="KW-0456">Lyase</keyword>
<keyword id="KW-0479">Metal-binding</keyword>
<keyword id="KW-0949">S-adenosyl-L-methionine</keyword>
<keyword id="KW-0784">Thiamine biosynthesis</keyword>
<keyword id="KW-0862">Zinc</keyword>
<sequence>MIEQAVADLWLPIAVLIMRASWVSPRKGQANVSQMHYARQGVVTEEMAYVAKRENLPESLVMEEVARGRMIIPANINHTGLEPMAIGIASKCKVNANIGASPNASDAAEEVNKLKLAVKYGADTVMDLSTGGVNLDEVRTAIIDASPVPIGTVPVYQALESVHGSIEKLDEDDFLHIIEKHCQQGVDYQTIHAGLLIEHLPKVKGRLTGIVSRGGGILAQWMLYHHRQNPLYTRFDDICEIFKRYDCTFSLGDSLRPGCQHDASDAAQLAELKTLGELTRRAWKHDVQVMVEGPGHVPLDQIEFNVKKQMEECNEAPFYVLGPLVTDIAPGYDHITSAIGAAMAGWHGTAMLCYVTPKEHLGLPNAEDVREGLIAYKIAAHAADIARHRPGARDRDDELSRARYNFDWNKQFELSLDPERAKEYHDETLPADIYKQAEFCSMCGPKHCPMQTKITEEDIEGLEKVLEARGAAELTPVKLDKAD</sequence>
<feature type="chain" id="PRO_0000152841" description="Phosphomethylpyrimidine synthase">
    <location>
        <begin position="1"/>
        <end position="483"/>
    </location>
</feature>
<feature type="binding site" evidence="1">
    <location>
        <position position="97"/>
    </location>
    <ligand>
        <name>substrate</name>
    </ligand>
</feature>
<feature type="binding site" evidence="1">
    <location>
        <position position="126"/>
    </location>
    <ligand>
        <name>substrate</name>
    </ligand>
</feature>
<feature type="binding site" evidence="1">
    <location>
        <position position="156"/>
    </location>
    <ligand>
        <name>substrate</name>
    </ligand>
</feature>
<feature type="binding site" evidence="1">
    <location>
        <position position="192"/>
    </location>
    <ligand>
        <name>substrate</name>
    </ligand>
</feature>
<feature type="binding site" evidence="1">
    <location>
        <begin position="212"/>
        <end position="214"/>
    </location>
    <ligand>
        <name>substrate</name>
    </ligand>
</feature>
<feature type="binding site" evidence="1">
    <location>
        <begin position="253"/>
        <end position="256"/>
    </location>
    <ligand>
        <name>substrate</name>
    </ligand>
</feature>
<feature type="binding site" evidence="1">
    <location>
        <position position="292"/>
    </location>
    <ligand>
        <name>substrate</name>
    </ligand>
</feature>
<feature type="binding site" evidence="1">
    <location>
        <position position="296"/>
    </location>
    <ligand>
        <name>Zn(2+)</name>
        <dbReference type="ChEBI" id="CHEBI:29105"/>
    </ligand>
</feature>
<feature type="binding site" evidence="1">
    <location>
        <position position="319"/>
    </location>
    <ligand>
        <name>substrate</name>
    </ligand>
</feature>
<feature type="binding site" evidence="1">
    <location>
        <position position="360"/>
    </location>
    <ligand>
        <name>Zn(2+)</name>
        <dbReference type="ChEBI" id="CHEBI:29105"/>
    </ligand>
</feature>
<feature type="binding site" evidence="1">
    <location>
        <position position="440"/>
    </location>
    <ligand>
        <name>[4Fe-4S] cluster</name>
        <dbReference type="ChEBI" id="CHEBI:49883"/>
        <note>4Fe-4S-S-AdoMet</note>
    </ligand>
</feature>
<feature type="binding site" evidence="1">
    <location>
        <position position="443"/>
    </location>
    <ligand>
        <name>[4Fe-4S] cluster</name>
        <dbReference type="ChEBI" id="CHEBI:49883"/>
        <note>4Fe-4S-S-AdoMet</note>
    </ligand>
</feature>
<feature type="binding site" evidence="1">
    <location>
        <position position="448"/>
    </location>
    <ligand>
        <name>[4Fe-4S] cluster</name>
        <dbReference type="ChEBI" id="CHEBI:49883"/>
        <note>4Fe-4S-S-AdoMet</note>
    </ligand>
</feature>
<reference key="1">
    <citation type="journal article" date="2003" name="Nature">
        <title>The genome of a motile marine Synechococcus.</title>
        <authorList>
            <person name="Palenik B."/>
            <person name="Brahamsha B."/>
            <person name="Larimer F.W."/>
            <person name="Land M.L."/>
            <person name="Hauser L."/>
            <person name="Chain P."/>
            <person name="Lamerdin J.E."/>
            <person name="Regala W."/>
            <person name="Allen E.E."/>
            <person name="McCarren J."/>
            <person name="Paulsen I.T."/>
            <person name="Dufresne A."/>
            <person name="Partensky F."/>
            <person name="Webb E.A."/>
            <person name="Waterbury J."/>
        </authorList>
    </citation>
    <scope>NUCLEOTIDE SEQUENCE [LARGE SCALE GENOMIC DNA]</scope>
    <source>
        <strain>WH8102</strain>
    </source>
</reference>
<gene>
    <name evidence="1" type="primary">thiC</name>
    <name type="ordered locus">SYNW0140</name>
</gene>
<accession>Q7U9W2</accession>
<organism>
    <name type="scientific">Parasynechococcus marenigrum (strain WH8102)</name>
    <dbReference type="NCBI Taxonomy" id="84588"/>
    <lineage>
        <taxon>Bacteria</taxon>
        <taxon>Bacillati</taxon>
        <taxon>Cyanobacteriota</taxon>
        <taxon>Cyanophyceae</taxon>
        <taxon>Synechococcales</taxon>
        <taxon>Prochlorococcaceae</taxon>
        <taxon>Parasynechococcus</taxon>
        <taxon>Parasynechococcus marenigrum</taxon>
    </lineage>
</organism>
<proteinExistence type="inferred from homology"/>
<evidence type="ECO:0000255" key="1">
    <source>
        <dbReference type="HAMAP-Rule" id="MF_00089"/>
    </source>
</evidence>
<protein>
    <recommendedName>
        <fullName evidence="1">Phosphomethylpyrimidine synthase</fullName>
        <ecNumber evidence="1">4.1.99.17</ecNumber>
    </recommendedName>
    <alternativeName>
        <fullName evidence="1">Hydroxymethylpyrimidine phosphate synthase</fullName>
        <shortName evidence="1">HMP-P synthase</shortName>
        <shortName evidence="1">HMP-phosphate synthase</shortName>
        <shortName evidence="1">HMPP synthase</shortName>
    </alternativeName>
    <alternativeName>
        <fullName evidence="1">Thiamine biosynthesis protein ThiC</fullName>
    </alternativeName>
</protein>
<name>THIC_PARMW</name>
<comment type="function">
    <text evidence="1">Catalyzes the synthesis of the hydroxymethylpyrimidine phosphate (HMP-P) moiety of thiamine from aminoimidazole ribotide (AIR) in a radical S-adenosyl-L-methionine (SAM)-dependent reaction.</text>
</comment>
<comment type="catalytic activity">
    <reaction evidence="1">
        <text>5-amino-1-(5-phospho-beta-D-ribosyl)imidazole + S-adenosyl-L-methionine = 4-amino-2-methyl-5-(phosphooxymethyl)pyrimidine + CO + 5'-deoxyadenosine + formate + L-methionine + 3 H(+)</text>
        <dbReference type="Rhea" id="RHEA:24840"/>
        <dbReference type="ChEBI" id="CHEBI:15378"/>
        <dbReference type="ChEBI" id="CHEBI:15740"/>
        <dbReference type="ChEBI" id="CHEBI:17245"/>
        <dbReference type="ChEBI" id="CHEBI:17319"/>
        <dbReference type="ChEBI" id="CHEBI:57844"/>
        <dbReference type="ChEBI" id="CHEBI:58354"/>
        <dbReference type="ChEBI" id="CHEBI:59789"/>
        <dbReference type="ChEBI" id="CHEBI:137981"/>
        <dbReference type="EC" id="4.1.99.17"/>
    </reaction>
</comment>
<comment type="cofactor">
    <cofactor evidence="1">
        <name>[4Fe-4S] cluster</name>
        <dbReference type="ChEBI" id="CHEBI:49883"/>
    </cofactor>
    <text evidence="1">Binds 1 [4Fe-4S] cluster per subunit. The cluster is coordinated with 3 cysteines and an exchangeable S-adenosyl-L-methionine.</text>
</comment>
<comment type="pathway">
    <text evidence="1">Cofactor biosynthesis; thiamine diphosphate biosynthesis.</text>
</comment>
<comment type="similarity">
    <text evidence="1">Belongs to the ThiC family.</text>
</comment>
<dbReference type="EC" id="4.1.99.17" evidence="1"/>
<dbReference type="EMBL" id="BX569689">
    <property type="protein sequence ID" value="CAE06655.1"/>
    <property type="molecule type" value="Genomic_DNA"/>
</dbReference>
<dbReference type="SMR" id="Q7U9W2"/>
<dbReference type="STRING" id="84588.SYNW0140"/>
<dbReference type="KEGG" id="syw:SYNW0140"/>
<dbReference type="eggNOG" id="COG0422">
    <property type="taxonomic scope" value="Bacteria"/>
</dbReference>
<dbReference type="HOGENOM" id="CLU_013181_2_1_3"/>
<dbReference type="UniPathway" id="UPA00060"/>
<dbReference type="Proteomes" id="UP000001422">
    <property type="component" value="Chromosome"/>
</dbReference>
<dbReference type="GO" id="GO:0005829">
    <property type="term" value="C:cytosol"/>
    <property type="evidence" value="ECO:0007669"/>
    <property type="project" value="TreeGrafter"/>
</dbReference>
<dbReference type="GO" id="GO:0051539">
    <property type="term" value="F:4 iron, 4 sulfur cluster binding"/>
    <property type="evidence" value="ECO:0007669"/>
    <property type="project" value="UniProtKB-KW"/>
</dbReference>
<dbReference type="GO" id="GO:0016830">
    <property type="term" value="F:carbon-carbon lyase activity"/>
    <property type="evidence" value="ECO:0007669"/>
    <property type="project" value="InterPro"/>
</dbReference>
<dbReference type="GO" id="GO:0008270">
    <property type="term" value="F:zinc ion binding"/>
    <property type="evidence" value="ECO:0007669"/>
    <property type="project" value="UniProtKB-UniRule"/>
</dbReference>
<dbReference type="GO" id="GO:0009228">
    <property type="term" value="P:thiamine biosynthetic process"/>
    <property type="evidence" value="ECO:0007669"/>
    <property type="project" value="UniProtKB-KW"/>
</dbReference>
<dbReference type="GO" id="GO:0009229">
    <property type="term" value="P:thiamine diphosphate biosynthetic process"/>
    <property type="evidence" value="ECO:0007669"/>
    <property type="project" value="UniProtKB-UniRule"/>
</dbReference>
<dbReference type="FunFam" id="3.20.20.540:FF:000001">
    <property type="entry name" value="Phosphomethylpyrimidine synthase"/>
    <property type="match status" value="1"/>
</dbReference>
<dbReference type="Gene3D" id="6.10.250.620">
    <property type="match status" value="1"/>
</dbReference>
<dbReference type="Gene3D" id="3.20.20.540">
    <property type="entry name" value="Radical SAM ThiC family, central domain"/>
    <property type="match status" value="1"/>
</dbReference>
<dbReference type="HAMAP" id="MF_00089">
    <property type="entry name" value="ThiC"/>
    <property type="match status" value="1"/>
</dbReference>
<dbReference type="InterPro" id="IPR037509">
    <property type="entry name" value="ThiC"/>
</dbReference>
<dbReference type="InterPro" id="IPR038521">
    <property type="entry name" value="ThiC/Bza_core_dom"/>
</dbReference>
<dbReference type="InterPro" id="IPR002817">
    <property type="entry name" value="ThiC/BzaA/B"/>
</dbReference>
<dbReference type="NCBIfam" id="NF006763">
    <property type="entry name" value="PRK09284.1"/>
    <property type="match status" value="1"/>
</dbReference>
<dbReference type="NCBIfam" id="NF009895">
    <property type="entry name" value="PRK13352.1"/>
    <property type="match status" value="1"/>
</dbReference>
<dbReference type="NCBIfam" id="TIGR00190">
    <property type="entry name" value="thiC"/>
    <property type="match status" value="1"/>
</dbReference>
<dbReference type="PANTHER" id="PTHR30557:SF1">
    <property type="entry name" value="PHOSPHOMETHYLPYRIMIDINE SYNTHASE, CHLOROPLASTIC"/>
    <property type="match status" value="1"/>
</dbReference>
<dbReference type="PANTHER" id="PTHR30557">
    <property type="entry name" value="THIAMINE BIOSYNTHESIS PROTEIN THIC"/>
    <property type="match status" value="1"/>
</dbReference>
<dbReference type="Pfam" id="PF01964">
    <property type="entry name" value="ThiC_Rad_SAM"/>
    <property type="match status" value="1"/>
</dbReference>
<dbReference type="SFLD" id="SFLDF00407">
    <property type="entry name" value="phosphomethylpyrimidine_syntha"/>
    <property type="match status" value="1"/>
</dbReference>
<dbReference type="SFLD" id="SFLDG01114">
    <property type="entry name" value="phosphomethylpyrimidine_syntha"/>
    <property type="match status" value="1"/>
</dbReference>
<dbReference type="SFLD" id="SFLDS00113">
    <property type="entry name" value="Radical_SAM_Phosphomethylpyrim"/>
    <property type="match status" value="1"/>
</dbReference>